<keyword id="KW-0007">Acetylation</keyword>
<keyword id="KW-0968">Cytoplasmic vesicle</keyword>
<keyword id="KW-0903">Direct protein sequencing</keyword>
<keyword id="KW-0967">Endosome</keyword>
<keyword id="KW-1017">Isopeptide bond</keyword>
<keyword id="KW-0446">Lipid-binding</keyword>
<keyword id="KW-0488">Methylation</keyword>
<keyword id="KW-0597">Phosphoprotein</keyword>
<keyword id="KW-0653">Protein transport</keyword>
<keyword id="KW-1185">Reference proteome</keyword>
<keyword id="KW-0813">Transport</keyword>
<keyword id="KW-0832">Ubl conjugation</keyword>
<accession>Q5U211</accession>
<feature type="initiator methionine" description="Removed" evidence="1">
    <location>
        <position position="1"/>
    </location>
</feature>
<feature type="chain" id="PRO_0000288475" description="Sorting nexin-3">
    <location>
        <begin position="2"/>
        <end position="162"/>
    </location>
</feature>
<feature type="domain" description="PX" evidence="4">
    <location>
        <begin position="27"/>
        <end position="151"/>
    </location>
</feature>
<feature type="region of interest" description="Binds predominantly to PtdIns(P5) and weaker to PtdIns(P3) abd PtdIns(P4); involved in neurite outgrowth regulation" evidence="2">
    <location>
        <begin position="147"/>
        <end position="162"/>
    </location>
</feature>
<feature type="binding site" evidence="3">
    <location>
        <position position="70"/>
    </location>
    <ligand>
        <name>a 1,2-diacyl-sn-glycero-3-phospho-(1D-myo-inositol-3-phosphate)</name>
        <dbReference type="ChEBI" id="CHEBI:58088"/>
    </ligand>
</feature>
<feature type="binding site" evidence="3">
    <location>
        <position position="72"/>
    </location>
    <ligand>
        <name>a 1,2-diacyl-sn-glycero-3-phospho-(1D-myo-inositol-3-phosphate)</name>
        <dbReference type="ChEBI" id="CHEBI:58088"/>
    </ligand>
</feature>
<feature type="binding site" evidence="3">
    <location>
        <position position="95"/>
    </location>
    <ligand>
        <name>a 1,2-diacyl-sn-glycero-3-phospho-(1D-myo-inositol-3-phosphate)</name>
        <dbReference type="ChEBI" id="CHEBI:58088"/>
    </ligand>
</feature>
<feature type="binding site" evidence="3">
    <location>
        <position position="118"/>
    </location>
    <ligand>
        <name>a 1,2-diacyl-sn-glycero-3-phospho-(1D-myo-inositol-3-phosphate)</name>
        <dbReference type="ChEBI" id="CHEBI:58088"/>
    </ligand>
</feature>
<feature type="modified residue" description="N-acetylalanine" evidence="1">
    <location>
        <position position="2"/>
    </location>
</feature>
<feature type="modified residue" description="Omega-N-methylarginine" evidence="1">
    <location>
        <position position="43"/>
    </location>
</feature>
<feature type="modified residue" description="Phosphoserine" evidence="6">
    <location>
        <position position="72"/>
    </location>
</feature>
<feature type="cross-link" description="Glycyl lysine isopeptide (Lys-Gly) (interchain with G-Cter in SUMO2)" evidence="1">
    <location>
        <position position="95"/>
    </location>
</feature>
<organism>
    <name type="scientific">Rattus norvegicus</name>
    <name type="common">Rat</name>
    <dbReference type="NCBI Taxonomy" id="10116"/>
    <lineage>
        <taxon>Eukaryota</taxon>
        <taxon>Metazoa</taxon>
        <taxon>Chordata</taxon>
        <taxon>Craniata</taxon>
        <taxon>Vertebrata</taxon>
        <taxon>Euteleostomi</taxon>
        <taxon>Mammalia</taxon>
        <taxon>Eutheria</taxon>
        <taxon>Euarchontoglires</taxon>
        <taxon>Glires</taxon>
        <taxon>Rodentia</taxon>
        <taxon>Myomorpha</taxon>
        <taxon>Muroidea</taxon>
        <taxon>Muridae</taxon>
        <taxon>Murinae</taxon>
        <taxon>Rattus</taxon>
    </lineage>
</organism>
<name>SNX3_RAT</name>
<reference key="1">
    <citation type="journal article" date="2004" name="Genome Res.">
        <title>The status, quality, and expansion of the NIH full-length cDNA project: the Mammalian Gene Collection (MGC).</title>
        <authorList>
            <consortium name="The MGC Project Team"/>
        </authorList>
    </citation>
    <scope>NUCLEOTIDE SEQUENCE [LARGE SCALE MRNA]</scope>
    <source>
        <tissue>Ovary</tissue>
        <tissue>Placenta</tissue>
    </source>
</reference>
<reference key="2">
    <citation type="submission" date="2007-04" db="UniProtKB">
        <authorList>
            <person name="Lubec G."/>
            <person name="Diao W."/>
        </authorList>
    </citation>
    <scope>PROTEIN SEQUENCE OF 105-118</scope>
    <scope>IDENTIFICATION BY MASS SPECTROMETRY</scope>
    <source>
        <strain>Sprague-Dawley</strain>
        <tissue>Hippocampus</tissue>
    </source>
</reference>
<reference key="3">
    <citation type="journal article" date="2012" name="Nat. Commun.">
        <title>Quantitative maps of protein phosphorylation sites across 14 different rat organs and tissues.</title>
        <authorList>
            <person name="Lundby A."/>
            <person name="Secher A."/>
            <person name="Lage K."/>
            <person name="Nordsborg N.B."/>
            <person name="Dmytriyev A."/>
            <person name="Lundby C."/>
            <person name="Olsen J.V."/>
        </authorList>
    </citation>
    <scope>PHOSPHORYLATION [LARGE SCALE ANALYSIS] AT SER-72</scope>
    <scope>IDENTIFICATION BY MASS SPECTROMETRY [LARGE SCALE ANALYSIS]</scope>
</reference>
<dbReference type="EMBL" id="BC086341">
    <property type="protein sequence ID" value="AAH86341.1"/>
    <property type="molecule type" value="mRNA"/>
</dbReference>
<dbReference type="EMBL" id="BC107918">
    <property type="protein sequence ID" value="AAI07919.1"/>
    <property type="molecule type" value="mRNA"/>
</dbReference>
<dbReference type="RefSeq" id="NP_001037748.1">
    <property type="nucleotide sequence ID" value="NM_001044283.1"/>
</dbReference>
<dbReference type="SMR" id="Q5U211"/>
<dbReference type="BioGRID" id="598983">
    <property type="interactions" value="1"/>
</dbReference>
<dbReference type="FunCoup" id="Q5U211">
    <property type="interactions" value="2897"/>
</dbReference>
<dbReference type="STRING" id="10116.ENSRNOP00000068200"/>
<dbReference type="iPTMnet" id="Q5U211"/>
<dbReference type="PhosphoSitePlus" id="Q5U211"/>
<dbReference type="jPOST" id="Q5U211"/>
<dbReference type="Ensembl" id="ENSRNOT00000074532.4">
    <property type="protein sequence ID" value="ENSRNOP00000092005.1"/>
    <property type="gene ID" value="ENSRNOG00000046705.4"/>
</dbReference>
<dbReference type="GeneID" id="684097"/>
<dbReference type="KEGG" id="rno:684097"/>
<dbReference type="AGR" id="RGD:1595151"/>
<dbReference type="CTD" id="8724"/>
<dbReference type="RGD" id="1595151">
    <property type="gene designation" value="Snx3"/>
</dbReference>
<dbReference type="GeneTree" id="ENSGT00940000153609"/>
<dbReference type="InParanoid" id="Q5U211"/>
<dbReference type="OMA" id="VGRQRYT"/>
<dbReference type="OrthoDB" id="5227681at2759"/>
<dbReference type="PhylomeDB" id="Q5U211"/>
<dbReference type="Reactome" id="R-RNO-3238698">
    <property type="pathway name" value="WNT ligand biogenesis and trafficking"/>
</dbReference>
<dbReference type="Reactome" id="R-RNO-5689880">
    <property type="pathway name" value="Ub-specific processing proteases"/>
</dbReference>
<dbReference type="PRO" id="PR:Q5U211"/>
<dbReference type="Proteomes" id="UP000002494">
    <property type="component" value="Chromosome 20"/>
</dbReference>
<dbReference type="GO" id="GO:0030136">
    <property type="term" value="C:clathrin-coated vesicle"/>
    <property type="evidence" value="ECO:0000250"/>
    <property type="project" value="UniProtKB"/>
</dbReference>
<dbReference type="GO" id="GO:0005737">
    <property type="term" value="C:cytoplasm"/>
    <property type="evidence" value="ECO:0000266"/>
    <property type="project" value="RGD"/>
</dbReference>
<dbReference type="GO" id="GO:0005829">
    <property type="term" value="C:cytosol"/>
    <property type="evidence" value="ECO:0000266"/>
    <property type="project" value="RGD"/>
</dbReference>
<dbReference type="GO" id="GO:0005769">
    <property type="term" value="C:early endosome"/>
    <property type="evidence" value="ECO:0000250"/>
    <property type="project" value="UniProtKB"/>
</dbReference>
<dbReference type="GO" id="GO:0031901">
    <property type="term" value="C:early endosome membrane"/>
    <property type="evidence" value="ECO:0000266"/>
    <property type="project" value="RGD"/>
</dbReference>
<dbReference type="GO" id="GO:0032009">
    <property type="term" value="C:early phagosome"/>
    <property type="evidence" value="ECO:0000250"/>
    <property type="project" value="UniProtKB"/>
</dbReference>
<dbReference type="GO" id="GO:0010008">
    <property type="term" value="C:endosome membrane"/>
    <property type="evidence" value="ECO:0000250"/>
    <property type="project" value="UniProtKB"/>
</dbReference>
<dbReference type="GO" id="GO:0030904">
    <property type="term" value="C:retromer complex"/>
    <property type="evidence" value="ECO:0000266"/>
    <property type="project" value="RGD"/>
</dbReference>
<dbReference type="GO" id="GO:0080025">
    <property type="term" value="F:phosphatidylinositol-3,5-bisphosphate binding"/>
    <property type="evidence" value="ECO:0000250"/>
    <property type="project" value="UniProtKB"/>
</dbReference>
<dbReference type="GO" id="GO:0032266">
    <property type="term" value="F:phosphatidylinositol-3-phosphate binding"/>
    <property type="evidence" value="ECO:0000250"/>
    <property type="project" value="UniProtKB"/>
</dbReference>
<dbReference type="GO" id="GO:0070273">
    <property type="term" value="F:phosphatidylinositol-4-phosphate binding"/>
    <property type="evidence" value="ECO:0000250"/>
    <property type="project" value="UniProtKB"/>
</dbReference>
<dbReference type="GO" id="GO:0010314">
    <property type="term" value="F:phosphatidylinositol-5-phosphate binding"/>
    <property type="evidence" value="ECO:0000250"/>
    <property type="project" value="UniProtKB"/>
</dbReference>
<dbReference type="GO" id="GO:0019903">
    <property type="term" value="F:protein phosphatase binding"/>
    <property type="evidence" value="ECO:0000266"/>
    <property type="project" value="RGD"/>
</dbReference>
<dbReference type="GO" id="GO:1905394">
    <property type="term" value="F:retromer complex binding"/>
    <property type="evidence" value="ECO:0000250"/>
    <property type="project" value="UniProtKB"/>
</dbReference>
<dbReference type="GO" id="GO:0032456">
    <property type="term" value="P:endocytic recycling"/>
    <property type="evidence" value="ECO:0000318"/>
    <property type="project" value="GO_Central"/>
</dbReference>
<dbReference type="GO" id="GO:0042541">
    <property type="term" value="P:hemoglobin biosynthetic process"/>
    <property type="evidence" value="ECO:0000266"/>
    <property type="project" value="RGD"/>
</dbReference>
<dbReference type="GO" id="GO:0046597">
    <property type="term" value="P:host-mediated suppression of symbiont invasion"/>
    <property type="evidence" value="ECO:0000266"/>
    <property type="project" value="RGD"/>
</dbReference>
<dbReference type="GO" id="GO:0070676">
    <property type="term" value="P:intralumenal vesicle formation"/>
    <property type="evidence" value="ECO:0000266"/>
    <property type="project" value="RGD"/>
</dbReference>
<dbReference type="GO" id="GO:0034499">
    <property type="term" value="P:late endosome to Golgi transport"/>
    <property type="evidence" value="ECO:0000318"/>
    <property type="project" value="GO_Central"/>
</dbReference>
<dbReference type="GO" id="GO:0010324">
    <property type="term" value="P:membrane invagination"/>
    <property type="evidence" value="ECO:0000266"/>
    <property type="project" value="RGD"/>
</dbReference>
<dbReference type="GO" id="GO:2000642">
    <property type="term" value="P:negative regulation of early endosome to late endosome transport"/>
    <property type="evidence" value="ECO:0000266"/>
    <property type="project" value="RGD"/>
</dbReference>
<dbReference type="GO" id="GO:0050765">
    <property type="term" value="P:negative regulation of phagocytosis"/>
    <property type="evidence" value="ECO:0000250"/>
    <property type="project" value="UniProtKB"/>
</dbReference>
<dbReference type="GO" id="GO:0042177">
    <property type="term" value="P:negative regulation of protein catabolic process"/>
    <property type="evidence" value="ECO:0000266"/>
    <property type="project" value="RGD"/>
</dbReference>
<dbReference type="GO" id="GO:0051224">
    <property type="term" value="P:negative regulation of protein transport"/>
    <property type="evidence" value="ECO:0000266"/>
    <property type="project" value="RGD"/>
</dbReference>
<dbReference type="GO" id="GO:0010976">
    <property type="term" value="P:positive regulation of neuron projection development"/>
    <property type="evidence" value="ECO:0000250"/>
    <property type="project" value="UniProtKB"/>
</dbReference>
<dbReference type="GO" id="GO:0022615">
    <property type="term" value="P:protein to membrane docking"/>
    <property type="evidence" value="ECO:0000250"/>
    <property type="project" value="UniProtKB"/>
</dbReference>
<dbReference type="GO" id="GO:0033157">
    <property type="term" value="P:regulation of intracellular protein transport"/>
    <property type="evidence" value="ECO:0000266"/>
    <property type="project" value="RGD"/>
</dbReference>
<dbReference type="GO" id="GO:0051246">
    <property type="term" value="P:regulation of protein metabolic process"/>
    <property type="evidence" value="ECO:0000266"/>
    <property type="project" value="RGD"/>
</dbReference>
<dbReference type="GO" id="GO:0030111">
    <property type="term" value="P:regulation of Wnt signaling pathway"/>
    <property type="evidence" value="ECO:0000250"/>
    <property type="project" value="UniProtKB"/>
</dbReference>
<dbReference type="GO" id="GO:0009617">
    <property type="term" value="P:response to bacterium"/>
    <property type="evidence" value="ECO:0000266"/>
    <property type="project" value="RGD"/>
</dbReference>
<dbReference type="GO" id="GO:0033572">
    <property type="term" value="P:transferrin transport"/>
    <property type="evidence" value="ECO:0000266"/>
    <property type="project" value="RGD"/>
</dbReference>
<dbReference type="CDD" id="cd07293">
    <property type="entry name" value="PX_SNX3"/>
    <property type="match status" value="1"/>
</dbReference>
<dbReference type="FunFam" id="3.30.1520.10:FF:000002">
    <property type="entry name" value="Sorting nexin 12"/>
    <property type="match status" value="1"/>
</dbReference>
<dbReference type="Gene3D" id="3.30.1520.10">
    <property type="entry name" value="Phox-like domain"/>
    <property type="match status" value="1"/>
</dbReference>
<dbReference type="InterPro" id="IPR001683">
    <property type="entry name" value="PX_dom"/>
</dbReference>
<dbReference type="InterPro" id="IPR036871">
    <property type="entry name" value="PX_dom_sf"/>
</dbReference>
<dbReference type="InterPro" id="IPR042137">
    <property type="entry name" value="PX_SNX3_Vert"/>
</dbReference>
<dbReference type="InterPro" id="IPR051074">
    <property type="entry name" value="Sorting_Nexin"/>
</dbReference>
<dbReference type="PANTHER" id="PTHR45963">
    <property type="entry name" value="RE52028P"/>
    <property type="match status" value="1"/>
</dbReference>
<dbReference type="PANTHER" id="PTHR45963:SF1">
    <property type="entry name" value="SORTING NEXIN-3"/>
    <property type="match status" value="1"/>
</dbReference>
<dbReference type="Pfam" id="PF00787">
    <property type="entry name" value="PX"/>
    <property type="match status" value="1"/>
</dbReference>
<dbReference type="SMART" id="SM00312">
    <property type="entry name" value="PX"/>
    <property type="match status" value="1"/>
</dbReference>
<dbReference type="SUPFAM" id="SSF64268">
    <property type="entry name" value="PX domain"/>
    <property type="match status" value="1"/>
</dbReference>
<dbReference type="PROSITE" id="PS50195">
    <property type="entry name" value="PX"/>
    <property type="match status" value="1"/>
</dbReference>
<comment type="function">
    <text evidence="1 2">Phosphoinositide-binding protein required for multivesicular body formation. Specifically binds phosphatidylinositol 3-phosphate (PtdIns(P3)). Can also bind phosphatidylinositol 4-phosphate (PtdIns(P4)), phosphatidylinositol 5-phosphate (PtdIns(P5)) and phosphatidylinositol 3,5-biphosphate (PtdIns(3,5)P2). Plays a role in protein transport between cellular compartments. Together with RAB7A facilitates endosome membrane association of the retromer cargo-selective subcomplex (CSC). May act in part as component of the SNX3-retromer complex which mediates the retrograde endosome-to-TGN transport of WLS distinct from the SNX-BAR retromer pathway. Promotes stability and cell surface expression of epithelial sodium channel (ENAC) subunits SCNN1A and SCNN1G. Not involved in EGFR degradation. Involved in the regulation of phagocytosis in dendritic cells possibly by regulating EEA1 recruitment to the nascent phagosomes. Involved in iron homeostasis through regulation of endocytic recycling of the transferrin receptor Tfrc presuambly by delivering the transferrin:transferrin receptor complex to recycling endosomes; the function may involve the CSC retromer subcomplex. Involved in regulation of neurite outgrowth in primary neurons.</text>
</comment>
<comment type="subunit">
    <text evidence="1 2">Interacts with VPS26A, VPS29 and VPS35; the interaction with VPS35 is direct. The association with the retromer CSC subcomplex subunits is proposed to represent a functional distinct retromer variant described as SNX3-retromer complex. Interacts with USP10 and SCNN1A. Interacts with TRFC. Interacts with SNX8; 2 molecules of SNX8 seems to associate with one molecule of SNX3. Interacts with PTPRU (By similarity). Interacts with MON2 and DOP1B.</text>
</comment>
<comment type="subcellular location">
    <subcellularLocation>
        <location evidence="1 2">Early endosome</location>
    </subcellularLocation>
    <subcellularLocation>
        <location evidence="1">Cytoplasmic vesicle</location>
        <location evidence="1">Phagosome</location>
    </subcellularLocation>
    <text evidence="1 2">Colocalizes to clathrin-coated endosomal vesicles morphologically distinct from retromer-decorated non-branched endosomal tubule structures. Colocalizes with EEA1 on nascent phagosomes in dendritic cells but competes with EEA1 for binding to phagosomal membrane (By similarity).</text>
</comment>
<comment type="domain">
    <text evidence="1">The PX domain mediates specific binding to phosphatidylinositol 3-phosphate (PtdIns(P3)).</text>
</comment>
<comment type="PTM">
    <text evidence="2">Ubiquitinated, leading to its proteasomal degradation. Deubiquitinated by USP10 (By similarity).</text>
</comment>
<comment type="similarity">
    <text evidence="5">Belongs to the sorting nexin family.</text>
</comment>
<gene>
    <name type="primary">Snx3</name>
</gene>
<proteinExistence type="evidence at protein level"/>
<evidence type="ECO:0000250" key="1">
    <source>
        <dbReference type="UniProtKB" id="O60493"/>
    </source>
</evidence>
<evidence type="ECO:0000250" key="2">
    <source>
        <dbReference type="UniProtKB" id="O70492"/>
    </source>
</evidence>
<evidence type="ECO:0000250" key="3">
    <source>
        <dbReference type="UniProtKB" id="Q96L94"/>
    </source>
</evidence>
<evidence type="ECO:0000255" key="4">
    <source>
        <dbReference type="PROSITE-ProRule" id="PRU00147"/>
    </source>
</evidence>
<evidence type="ECO:0000305" key="5"/>
<evidence type="ECO:0007744" key="6">
    <source>
    </source>
</evidence>
<protein>
    <recommendedName>
        <fullName>Sorting nexin-3</fullName>
    </recommendedName>
</protein>
<sequence>MAETVADTRRLITKPQNLNDAYGPPSNFLEIDVSNPQTVGVGRGRFTTYEIRVKTNLPIFKLKESTVRRRYSDFEWLRSELERESKVVVPPLPGKAFLRQLPFRGDDGIFDDNFIEERKQGLEQFINKVAGHPLAQNERCLHMFLQDEIIDKSYTPSKIRHA</sequence>